<name>PUR9_MOOTA</name>
<gene>
    <name evidence="1" type="primary">purH</name>
    <name type="ordered locus">Moth_2044</name>
</gene>
<protein>
    <recommendedName>
        <fullName evidence="1">Bifunctional purine biosynthesis protein PurH</fullName>
    </recommendedName>
    <domain>
        <recommendedName>
            <fullName evidence="1">Phosphoribosylaminoimidazolecarboxamide formyltransferase</fullName>
            <ecNumber evidence="1">2.1.2.3</ecNumber>
        </recommendedName>
        <alternativeName>
            <fullName evidence="1">AICAR transformylase</fullName>
        </alternativeName>
    </domain>
    <domain>
        <recommendedName>
            <fullName evidence="1">IMP cyclohydrolase</fullName>
            <ecNumber evidence="1">3.5.4.10</ecNumber>
        </recommendedName>
        <alternativeName>
            <fullName evidence="1">ATIC</fullName>
        </alternativeName>
        <alternativeName>
            <fullName evidence="1">IMP synthase</fullName>
        </alternativeName>
        <alternativeName>
            <fullName evidence="1">Inosinicase</fullName>
        </alternativeName>
    </domain>
</protein>
<comment type="catalytic activity">
    <reaction evidence="1">
        <text>(6R)-10-formyltetrahydrofolate + 5-amino-1-(5-phospho-beta-D-ribosyl)imidazole-4-carboxamide = 5-formamido-1-(5-phospho-D-ribosyl)imidazole-4-carboxamide + (6S)-5,6,7,8-tetrahydrofolate</text>
        <dbReference type="Rhea" id="RHEA:22192"/>
        <dbReference type="ChEBI" id="CHEBI:57453"/>
        <dbReference type="ChEBI" id="CHEBI:58467"/>
        <dbReference type="ChEBI" id="CHEBI:58475"/>
        <dbReference type="ChEBI" id="CHEBI:195366"/>
        <dbReference type="EC" id="2.1.2.3"/>
    </reaction>
</comment>
<comment type="catalytic activity">
    <reaction evidence="1">
        <text>IMP + H2O = 5-formamido-1-(5-phospho-D-ribosyl)imidazole-4-carboxamide</text>
        <dbReference type="Rhea" id="RHEA:18445"/>
        <dbReference type="ChEBI" id="CHEBI:15377"/>
        <dbReference type="ChEBI" id="CHEBI:58053"/>
        <dbReference type="ChEBI" id="CHEBI:58467"/>
        <dbReference type="EC" id="3.5.4.10"/>
    </reaction>
</comment>
<comment type="pathway">
    <text evidence="1">Purine metabolism; IMP biosynthesis via de novo pathway; 5-formamido-1-(5-phospho-D-ribosyl)imidazole-4-carboxamide from 5-amino-1-(5-phospho-D-ribosyl)imidazole-4-carboxamide (10-formyl THF route): step 1/1.</text>
</comment>
<comment type="pathway">
    <text evidence="1">Purine metabolism; IMP biosynthesis via de novo pathway; IMP from 5-formamido-1-(5-phospho-D-ribosyl)imidazole-4-carboxamide: step 1/1.</text>
</comment>
<comment type="domain">
    <text evidence="1">The IMP cyclohydrolase activity resides in the N-terminal region.</text>
</comment>
<comment type="similarity">
    <text evidence="1">Belongs to the PurH family.</text>
</comment>
<organism>
    <name type="scientific">Moorella thermoacetica (strain ATCC 39073 / JCM 9320)</name>
    <dbReference type="NCBI Taxonomy" id="264732"/>
    <lineage>
        <taxon>Bacteria</taxon>
        <taxon>Bacillati</taxon>
        <taxon>Bacillota</taxon>
        <taxon>Clostridia</taxon>
        <taxon>Moorellales</taxon>
        <taxon>Moorellaceae</taxon>
        <taxon>Moorella</taxon>
    </lineage>
</organism>
<reference key="1">
    <citation type="journal article" date="2008" name="Environ. Microbiol.">
        <title>The complete genome sequence of Moorella thermoacetica (f. Clostridium thermoaceticum).</title>
        <authorList>
            <person name="Pierce E."/>
            <person name="Xie G."/>
            <person name="Barabote R.D."/>
            <person name="Saunders E."/>
            <person name="Han C.S."/>
            <person name="Detter J.C."/>
            <person name="Richardson P."/>
            <person name="Brettin T.S."/>
            <person name="Das A."/>
            <person name="Ljungdahl L.G."/>
            <person name="Ragsdale S.W."/>
        </authorList>
    </citation>
    <scope>NUCLEOTIDE SEQUENCE [LARGE SCALE GENOMIC DNA]</scope>
    <source>
        <strain>ATCC 39073 / JCM 9320</strain>
    </source>
</reference>
<keyword id="KW-0378">Hydrolase</keyword>
<keyword id="KW-0511">Multifunctional enzyme</keyword>
<keyword id="KW-0658">Purine biosynthesis</keyword>
<keyword id="KW-0808">Transferase</keyword>
<accession>Q2RGU9</accession>
<feature type="chain" id="PRO_1000018909" description="Bifunctional purine biosynthesis protein PurH">
    <location>
        <begin position="1"/>
        <end position="513"/>
    </location>
</feature>
<feature type="domain" description="MGS-like" evidence="2">
    <location>
        <begin position="1"/>
        <end position="144"/>
    </location>
</feature>
<sequence>MSKRALISVSDKTGLVELARGLVELGWELLSTGGTARTLIAAGLPVTEVAAVTGFPEILDGRVKTLHPKIHGGILARPTPEHLAQLQEQGIQPIDLVVVNLYPFRETIARPGVTPAEAIENIDIGGPAMVRAAAKNHERVGIVVDPASYNEVLTELREKGSLSPETRRRLAAAAFAHTAAYDAAIAAYFQRLMRNEEPFPASFVLSGEKVQDLRYGENPHQGAAFYRLPAPPPGTLAGARQLQGKELSYNNLMDLDAAWNLACDFKEPVVAIIKHTNPCGVARASTPAAAYRLAYAADPVSAFGGIVACNRPVDGEMAGAMTEIFLEAVIAPSFTPEAMAILKSKSNLRLLAAGERAGCRTREYQIRPVSGGFLVQEPDYHVLEPESLKVVTARKPEAKEMADLLFAWQVVKHVKSNAIVVARDGVTLGIGAGQMNRVGAARIALEQAGARAKGAVLASDAFFPFGDTVELAAGAGITAIIQPGGSIRDEESIRAADAAGIAMVFTGIRHFRH</sequence>
<dbReference type="EC" id="2.1.2.3" evidence="1"/>
<dbReference type="EC" id="3.5.4.10" evidence="1"/>
<dbReference type="EMBL" id="CP000232">
    <property type="protein sequence ID" value="ABC20340.1"/>
    <property type="molecule type" value="Genomic_DNA"/>
</dbReference>
<dbReference type="RefSeq" id="YP_430883.1">
    <property type="nucleotide sequence ID" value="NC_007644.1"/>
</dbReference>
<dbReference type="SMR" id="Q2RGU9"/>
<dbReference type="STRING" id="264732.Moth_2044"/>
<dbReference type="EnsemblBacteria" id="ABC20340">
    <property type="protein sequence ID" value="ABC20340"/>
    <property type="gene ID" value="Moth_2044"/>
</dbReference>
<dbReference type="KEGG" id="mta:Moth_2044"/>
<dbReference type="PATRIC" id="fig|264732.11.peg.2220"/>
<dbReference type="eggNOG" id="COG0138">
    <property type="taxonomic scope" value="Bacteria"/>
</dbReference>
<dbReference type="HOGENOM" id="CLU_016316_5_2_9"/>
<dbReference type="OrthoDB" id="9802065at2"/>
<dbReference type="UniPathway" id="UPA00074">
    <property type="reaction ID" value="UER00133"/>
</dbReference>
<dbReference type="UniPathway" id="UPA00074">
    <property type="reaction ID" value="UER00135"/>
</dbReference>
<dbReference type="GO" id="GO:0005829">
    <property type="term" value="C:cytosol"/>
    <property type="evidence" value="ECO:0007669"/>
    <property type="project" value="TreeGrafter"/>
</dbReference>
<dbReference type="GO" id="GO:0003937">
    <property type="term" value="F:IMP cyclohydrolase activity"/>
    <property type="evidence" value="ECO:0007669"/>
    <property type="project" value="UniProtKB-UniRule"/>
</dbReference>
<dbReference type="GO" id="GO:0004643">
    <property type="term" value="F:phosphoribosylaminoimidazolecarboxamide formyltransferase activity"/>
    <property type="evidence" value="ECO:0007669"/>
    <property type="project" value="UniProtKB-UniRule"/>
</dbReference>
<dbReference type="GO" id="GO:0006189">
    <property type="term" value="P:'de novo' IMP biosynthetic process"/>
    <property type="evidence" value="ECO:0007669"/>
    <property type="project" value="UniProtKB-UniRule"/>
</dbReference>
<dbReference type="CDD" id="cd01421">
    <property type="entry name" value="IMPCH"/>
    <property type="match status" value="1"/>
</dbReference>
<dbReference type="FunFam" id="3.40.140.20:FF:000001">
    <property type="entry name" value="Bifunctional purine biosynthesis protein PurH"/>
    <property type="match status" value="1"/>
</dbReference>
<dbReference type="FunFam" id="3.40.140.20:FF:000002">
    <property type="entry name" value="Bifunctional purine biosynthesis protein PurH"/>
    <property type="match status" value="1"/>
</dbReference>
<dbReference type="FunFam" id="3.40.50.1380:FF:000001">
    <property type="entry name" value="Bifunctional purine biosynthesis protein PurH"/>
    <property type="match status" value="1"/>
</dbReference>
<dbReference type="Gene3D" id="3.40.140.20">
    <property type="match status" value="2"/>
</dbReference>
<dbReference type="Gene3D" id="3.40.50.1380">
    <property type="entry name" value="Methylglyoxal synthase-like domain"/>
    <property type="match status" value="1"/>
</dbReference>
<dbReference type="HAMAP" id="MF_00139">
    <property type="entry name" value="PurH"/>
    <property type="match status" value="1"/>
</dbReference>
<dbReference type="InterPro" id="IPR024051">
    <property type="entry name" value="AICAR_Tfase_dup_dom_sf"/>
</dbReference>
<dbReference type="InterPro" id="IPR016193">
    <property type="entry name" value="Cytidine_deaminase-like"/>
</dbReference>
<dbReference type="InterPro" id="IPR011607">
    <property type="entry name" value="MGS-like_dom"/>
</dbReference>
<dbReference type="InterPro" id="IPR036914">
    <property type="entry name" value="MGS-like_dom_sf"/>
</dbReference>
<dbReference type="InterPro" id="IPR002695">
    <property type="entry name" value="PurH-like"/>
</dbReference>
<dbReference type="NCBIfam" id="NF002049">
    <property type="entry name" value="PRK00881.1"/>
    <property type="match status" value="1"/>
</dbReference>
<dbReference type="NCBIfam" id="TIGR00355">
    <property type="entry name" value="purH"/>
    <property type="match status" value="1"/>
</dbReference>
<dbReference type="PANTHER" id="PTHR11692:SF0">
    <property type="entry name" value="BIFUNCTIONAL PURINE BIOSYNTHESIS PROTEIN ATIC"/>
    <property type="match status" value="1"/>
</dbReference>
<dbReference type="PANTHER" id="PTHR11692">
    <property type="entry name" value="BIFUNCTIONAL PURINE BIOSYNTHESIS PROTEIN PURH"/>
    <property type="match status" value="1"/>
</dbReference>
<dbReference type="Pfam" id="PF01808">
    <property type="entry name" value="AICARFT_IMPCHas"/>
    <property type="match status" value="1"/>
</dbReference>
<dbReference type="Pfam" id="PF02142">
    <property type="entry name" value="MGS"/>
    <property type="match status" value="1"/>
</dbReference>
<dbReference type="PIRSF" id="PIRSF000414">
    <property type="entry name" value="AICARFT_IMPCHas"/>
    <property type="match status" value="1"/>
</dbReference>
<dbReference type="SMART" id="SM00798">
    <property type="entry name" value="AICARFT_IMPCHas"/>
    <property type="match status" value="1"/>
</dbReference>
<dbReference type="SMART" id="SM00851">
    <property type="entry name" value="MGS"/>
    <property type="match status" value="1"/>
</dbReference>
<dbReference type="SUPFAM" id="SSF53927">
    <property type="entry name" value="Cytidine deaminase-like"/>
    <property type="match status" value="1"/>
</dbReference>
<dbReference type="SUPFAM" id="SSF52335">
    <property type="entry name" value="Methylglyoxal synthase-like"/>
    <property type="match status" value="1"/>
</dbReference>
<dbReference type="PROSITE" id="PS51855">
    <property type="entry name" value="MGS"/>
    <property type="match status" value="1"/>
</dbReference>
<evidence type="ECO:0000255" key="1">
    <source>
        <dbReference type="HAMAP-Rule" id="MF_00139"/>
    </source>
</evidence>
<evidence type="ECO:0000255" key="2">
    <source>
        <dbReference type="PROSITE-ProRule" id="PRU01202"/>
    </source>
</evidence>
<proteinExistence type="inferred from homology"/>